<proteinExistence type="inferred from homology"/>
<reference key="1">
    <citation type="journal article" date="1995" name="Gene">
        <title>Identification and characterization of IS1296 in Mycoplasma mycoides subsp. mycoides SC and presence in related mycoplasmas.</title>
        <authorList>
            <person name="Frey J."/>
            <person name="Cheng X."/>
            <person name="Kuhnert P."/>
            <person name="Nicolet J."/>
        </authorList>
    </citation>
    <scope>NUCLEOTIDE SEQUENCE [GENOMIC DNA]</scope>
    <source>
        <strain>L2</strain>
    </source>
</reference>
<reference key="2">
    <citation type="journal article" date="1996" name="Microbiology">
        <title>Characterization of the gene for an immunodominant 72 kDa lipoprotein of Mycoplasma mycoides subsp. mycoides small colony type.</title>
        <authorList>
            <person name="Cheng X."/>
            <person name="Nicolet J."/>
            <person name="Miserez R."/>
            <person name="Kuhnert P."/>
            <person name="Krampe M."/>
            <person name="Pilloud T."/>
            <person name="Abdo E.-M."/>
            <person name="Griot C."/>
            <person name="Frey J."/>
        </authorList>
    </citation>
    <scope>NUCLEOTIDE SEQUENCE [GENOMIC DNA]</scope>
    <source>
        <strain>L2</strain>
    </source>
</reference>
<protein>
    <recommendedName>
        <fullName>Insertion element IS1296 uncharacterized 21.4 kDa protein</fullName>
    </recommendedName>
    <alternativeName>
        <fullName>ORFA</fullName>
    </alternativeName>
</protein>
<keyword id="KW-0814">Transposable element</keyword>
<comment type="similarity">
    <text evidence="1">Belongs to the IS150/IS1296 orfA family.</text>
</comment>
<sequence>MSKLNLEKKLKIVKEAKKLNIKKSTYLANKYDISVDTVESLVNRFEAFRIEGLINKEKKPYYSAKLKLKIVLYKLETNHSYDEVAKKFNIIYSSTIAGWVKKYREYGFLGLNNNIGRPKKIMKNPNKKPAKIKKSQVKINNDQQIKELKEQVEYYKLEAEFWKKFHTLLTKEKSTRKKQK</sequence>
<feature type="chain" id="PRO_0000075497" description="Insertion element IS1296 uncharacterized 21.4 kDa protein">
    <location>
        <begin position="1"/>
        <end position="180"/>
    </location>
</feature>
<accession>Q50239</accession>
<evidence type="ECO:0000305" key="1"/>
<name>YI6A_MYCMI</name>
<dbReference type="EMBL" id="U61140">
    <property type="protein sequence ID" value="AAC44572.1"/>
    <property type="molecule type" value="Genomic_DNA"/>
</dbReference>
<dbReference type="SMR" id="Q50239"/>
<dbReference type="Gene3D" id="1.10.10.10">
    <property type="entry name" value="Winged helix-like DNA-binding domain superfamily/Winged helix DNA-binding domain"/>
    <property type="match status" value="1"/>
</dbReference>
<dbReference type="InterPro" id="IPR009057">
    <property type="entry name" value="Homeodomain-like_sf"/>
</dbReference>
<dbReference type="InterPro" id="IPR055247">
    <property type="entry name" value="InsJ-like_HTH"/>
</dbReference>
<dbReference type="InterPro" id="IPR052057">
    <property type="entry name" value="IS150/IS1296_orfA-like"/>
</dbReference>
<dbReference type="InterPro" id="IPR036388">
    <property type="entry name" value="WH-like_DNA-bd_sf"/>
</dbReference>
<dbReference type="PANTHER" id="PTHR33795">
    <property type="entry name" value="INSERTION ELEMENT IS150 PROTEIN INSJ"/>
    <property type="match status" value="1"/>
</dbReference>
<dbReference type="PANTHER" id="PTHR33795:SF1">
    <property type="entry name" value="INSERTION ELEMENT IS150 PROTEIN INSJ"/>
    <property type="match status" value="1"/>
</dbReference>
<dbReference type="Pfam" id="PF13518">
    <property type="entry name" value="HTH_28"/>
    <property type="match status" value="2"/>
</dbReference>
<dbReference type="SUPFAM" id="SSF46689">
    <property type="entry name" value="Homeodomain-like"/>
    <property type="match status" value="1"/>
</dbReference>
<organism>
    <name type="scientific">Mycoplasma mycoides subsp. mycoides SC</name>
    <dbReference type="NCBI Taxonomy" id="44101"/>
    <lineage>
        <taxon>Bacteria</taxon>
        <taxon>Bacillati</taxon>
        <taxon>Mycoplasmatota</taxon>
        <taxon>Mollicutes</taxon>
        <taxon>Mycoplasmataceae</taxon>
        <taxon>Mycoplasma</taxon>
    </lineage>
</organism>